<name>RUVA_XANOP</name>
<organism>
    <name type="scientific">Xanthomonas oryzae pv. oryzae (strain PXO99A)</name>
    <dbReference type="NCBI Taxonomy" id="360094"/>
    <lineage>
        <taxon>Bacteria</taxon>
        <taxon>Pseudomonadati</taxon>
        <taxon>Pseudomonadota</taxon>
        <taxon>Gammaproteobacteria</taxon>
        <taxon>Lysobacterales</taxon>
        <taxon>Lysobacteraceae</taxon>
        <taxon>Xanthomonas</taxon>
    </lineage>
</organism>
<sequence>MIGRLRGILAYKQPPWLVIDVGGVGYELEAPMSTFYDLPDVGRDVILFTHYAQKEDSVSLYGFLREGERRLFRDVQKVTGIGAKIALAVLSGVTVDEFARLITSGDITALTRIPGIGKKTAERMVVELRDRAADFSSGAPITGQLGPDAISEATVALQQLGYKPAEAARMARDAGAEGGEVATVIRKALQAALR</sequence>
<evidence type="ECO:0000255" key="1">
    <source>
        <dbReference type="HAMAP-Rule" id="MF_00031"/>
    </source>
</evidence>
<gene>
    <name evidence="1" type="primary">ruvA</name>
    <name type="ordered locus">PXO_01557</name>
</gene>
<feature type="chain" id="PRO_1000090386" description="Holliday junction branch migration complex subunit RuvA">
    <location>
        <begin position="1"/>
        <end position="194"/>
    </location>
</feature>
<feature type="region of interest" description="Domain I" evidence="1">
    <location>
        <begin position="1"/>
        <end position="64"/>
    </location>
</feature>
<feature type="region of interest" description="Domain II" evidence="1">
    <location>
        <begin position="65"/>
        <end position="140"/>
    </location>
</feature>
<feature type="region of interest" description="Flexible linker" evidence="1">
    <location>
        <begin position="140"/>
        <end position="144"/>
    </location>
</feature>
<feature type="region of interest" description="Domain III" evidence="1">
    <location>
        <begin position="145"/>
        <end position="194"/>
    </location>
</feature>
<keyword id="KW-0963">Cytoplasm</keyword>
<keyword id="KW-0227">DNA damage</keyword>
<keyword id="KW-0233">DNA recombination</keyword>
<keyword id="KW-0234">DNA repair</keyword>
<keyword id="KW-0238">DNA-binding</keyword>
<dbReference type="EMBL" id="CP000967">
    <property type="protein sequence ID" value="ACD59832.1"/>
    <property type="molecule type" value="Genomic_DNA"/>
</dbReference>
<dbReference type="RefSeq" id="WP_011258432.1">
    <property type="nucleotide sequence ID" value="NC_010717.2"/>
</dbReference>
<dbReference type="SMR" id="B2STK2"/>
<dbReference type="KEGG" id="xop:PXO_01557"/>
<dbReference type="eggNOG" id="COG0632">
    <property type="taxonomic scope" value="Bacteria"/>
</dbReference>
<dbReference type="HOGENOM" id="CLU_087936_0_0_6"/>
<dbReference type="Proteomes" id="UP000001740">
    <property type="component" value="Chromosome"/>
</dbReference>
<dbReference type="GO" id="GO:0005737">
    <property type="term" value="C:cytoplasm"/>
    <property type="evidence" value="ECO:0007669"/>
    <property type="project" value="UniProtKB-SubCell"/>
</dbReference>
<dbReference type="GO" id="GO:0009379">
    <property type="term" value="C:Holliday junction helicase complex"/>
    <property type="evidence" value="ECO:0007669"/>
    <property type="project" value="InterPro"/>
</dbReference>
<dbReference type="GO" id="GO:0048476">
    <property type="term" value="C:Holliday junction resolvase complex"/>
    <property type="evidence" value="ECO:0007669"/>
    <property type="project" value="UniProtKB-UniRule"/>
</dbReference>
<dbReference type="GO" id="GO:0005524">
    <property type="term" value="F:ATP binding"/>
    <property type="evidence" value="ECO:0007669"/>
    <property type="project" value="InterPro"/>
</dbReference>
<dbReference type="GO" id="GO:0000400">
    <property type="term" value="F:four-way junction DNA binding"/>
    <property type="evidence" value="ECO:0007669"/>
    <property type="project" value="UniProtKB-UniRule"/>
</dbReference>
<dbReference type="GO" id="GO:0009378">
    <property type="term" value="F:four-way junction helicase activity"/>
    <property type="evidence" value="ECO:0007669"/>
    <property type="project" value="InterPro"/>
</dbReference>
<dbReference type="GO" id="GO:0006310">
    <property type="term" value="P:DNA recombination"/>
    <property type="evidence" value="ECO:0007669"/>
    <property type="project" value="UniProtKB-UniRule"/>
</dbReference>
<dbReference type="GO" id="GO:0006281">
    <property type="term" value="P:DNA repair"/>
    <property type="evidence" value="ECO:0007669"/>
    <property type="project" value="UniProtKB-UniRule"/>
</dbReference>
<dbReference type="CDD" id="cd14332">
    <property type="entry name" value="UBA_RuvA_C"/>
    <property type="match status" value="1"/>
</dbReference>
<dbReference type="Gene3D" id="1.10.150.20">
    <property type="entry name" value="5' to 3' exonuclease, C-terminal subdomain"/>
    <property type="match status" value="1"/>
</dbReference>
<dbReference type="Gene3D" id="1.10.8.10">
    <property type="entry name" value="DNA helicase RuvA subunit, C-terminal domain"/>
    <property type="match status" value="1"/>
</dbReference>
<dbReference type="Gene3D" id="2.40.50.140">
    <property type="entry name" value="Nucleic acid-binding proteins"/>
    <property type="match status" value="1"/>
</dbReference>
<dbReference type="HAMAP" id="MF_00031">
    <property type="entry name" value="DNA_HJ_migration_RuvA"/>
    <property type="match status" value="1"/>
</dbReference>
<dbReference type="InterPro" id="IPR013849">
    <property type="entry name" value="DNA_helicase_Holl-junc_RuvA_I"/>
</dbReference>
<dbReference type="InterPro" id="IPR003583">
    <property type="entry name" value="Hlx-hairpin-Hlx_DNA-bd_motif"/>
</dbReference>
<dbReference type="InterPro" id="IPR012340">
    <property type="entry name" value="NA-bd_OB-fold"/>
</dbReference>
<dbReference type="InterPro" id="IPR000085">
    <property type="entry name" value="RuvA"/>
</dbReference>
<dbReference type="InterPro" id="IPR010994">
    <property type="entry name" value="RuvA_2-like"/>
</dbReference>
<dbReference type="InterPro" id="IPR011114">
    <property type="entry name" value="RuvA_C"/>
</dbReference>
<dbReference type="InterPro" id="IPR036267">
    <property type="entry name" value="RuvA_C_sf"/>
</dbReference>
<dbReference type="NCBIfam" id="TIGR00084">
    <property type="entry name" value="ruvA"/>
    <property type="match status" value="1"/>
</dbReference>
<dbReference type="Pfam" id="PF14520">
    <property type="entry name" value="HHH_5"/>
    <property type="match status" value="1"/>
</dbReference>
<dbReference type="Pfam" id="PF07499">
    <property type="entry name" value="RuvA_C"/>
    <property type="match status" value="1"/>
</dbReference>
<dbReference type="Pfam" id="PF01330">
    <property type="entry name" value="RuvA_N"/>
    <property type="match status" value="1"/>
</dbReference>
<dbReference type="SMART" id="SM00278">
    <property type="entry name" value="HhH1"/>
    <property type="match status" value="2"/>
</dbReference>
<dbReference type="SUPFAM" id="SSF46929">
    <property type="entry name" value="DNA helicase RuvA subunit, C-terminal domain"/>
    <property type="match status" value="1"/>
</dbReference>
<dbReference type="SUPFAM" id="SSF50249">
    <property type="entry name" value="Nucleic acid-binding proteins"/>
    <property type="match status" value="1"/>
</dbReference>
<dbReference type="SUPFAM" id="SSF47781">
    <property type="entry name" value="RuvA domain 2-like"/>
    <property type="match status" value="1"/>
</dbReference>
<accession>B2STK2</accession>
<proteinExistence type="inferred from homology"/>
<protein>
    <recommendedName>
        <fullName evidence="1">Holliday junction branch migration complex subunit RuvA</fullName>
    </recommendedName>
</protein>
<comment type="function">
    <text evidence="1">The RuvA-RuvB-RuvC complex processes Holliday junction (HJ) DNA during genetic recombination and DNA repair, while the RuvA-RuvB complex plays an important role in the rescue of blocked DNA replication forks via replication fork reversal (RFR). RuvA specifically binds to HJ cruciform DNA, conferring on it an open structure. The RuvB hexamer acts as an ATP-dependent pump, pulling dsDNA into and through the RuvAB complex. HJ branch migration allows RuvC to scan DNA until it finds its consensus sequence, where it cleaves and resolves the cruciform DNA.</text>
</comment>
<comment type="subunit">
    <text evidence="1">Homotetramer. Forms an RuvA(8)-RuvB(12)-Holliday junction (HJ) complex. HJ DNA is sandwiched between 2 RuvA tetramers; dsDNA enters through RuvA and exits via RuvB. An RuvB hexamer assembles on each DNA strand where it exits the tetramer. Each RuvB hexamer is contacted by two RuvA subunits (via domain III) on 2 adjacent RuvB subunits; this complex drives branch migration. In the full resolvosome a probable DNA-RuvA(4)-RuvB(12)-RuvC(2) complex forms which resolves the HJ.</text>
</comment>
<comment type="subcellular location">
    <subcellularLocation>
        <location evidence="1">Cytoplasm</location>
    </subcellularLocation>
</comment>
<comment type="domain">
    <text evidence="1">Has three domains with a flexible linker between the domains II and III and assumes an 'L' shape. Domain III is highly mobile and contacts RuvB.</text>
</comment>
<comment type="similarity">
    <text evidence="1">Belongs to the RuvA family.</text>
</comment>
<reference key="1">
    <citation type="journal article" date="2008" name="BMC Genomics">
        <title>Genome sequence and rapid evolution of the rice pathogen Xanthomonas oryzae pv. oryzae PXO99A.</title>
        <authorList>
            <person name="Salzberg S.L."/>
            <person name="Sommer D.D."/>
            <person name="Schatz M.C."/>
            <person name="Phillippy A.M."/>
            <person name="Rabinowicz P.D."/>
            <person name="Tsuge S."/>
            <person name="Furutani A."/>
            <person name="Ochiai H."/>
            <person name="Delcher A.L."/>
            <person name="Kelley D."/>
            <person name="Madupu R."/>
            <person name="Puiu D."/>
            <person name="Radune D."/>
            <person name="Shumway M."/>
            <person name="Trapnell C."/>
            <person name="Aparna G."/>
            <person name="Jha G."/>
            <person name="Pandey A."/>
            <person name="Patil P.B."/>
            <person name="Ishihara H."/>
            <person name="Meyer D.F."/>
            <person name="Szurek B."/>
            <person name="Verdier V."/>
            <person name="Koebnik R."/>
            <person name="Dow J.M."/>
            <person name="Ryan R.P."/>
            <person name="Hirata H."/>
            <person name="Tsuyumu S."/>
            <person name="Won Lee S."/>
            <person name="Seo Y.-S."/>
            <person name="Sriariyanum M."/>
            <person name="Ronald P.C."/>
            <person name="Sonti R.V."/>
            <person name="Van Sluys M.-A."/>
            <person name="Leach J.E."/>
            <person name="White F.F."/>
            <person name="Bogdanove A.J."/>
        </authorList>
    </citation>
    <scope>NUCLEOTIDE SEQUENCE [LARGE SCALE GENOMIC DNA]</scope>
    <source>
        <strain>PXO99A</strain>
    </source>
</reference>